<comment type="function">
    <text>Plays an essential role in the utilization of numerous aromatic and hydroaromatic compounds via the beta-ketoadipate pathway.</text>
</comment>
<comment type="catalytic activity">
    <reaction>
        <text>3,4-dihydroxybenzoate + O2 = 3-carboxy-cis,cis-muconate + 2 H(+)</text>
        <dbReference type="Rhea" id="RHEA:10084"/>
        <dbReference type="ChEBI" id="CHEBI:15378"/>
        <dbReference type="ChEBI" id="CHEBI:15379"/>
        <dbReference type="ChEBI" id="CHEBI:36241"/>
        <dbReference type="ChEBI" id="CHEBI:57496"/>
        <dbReference type="EC" id="1.13.11.3"/>
    </reaction>
</comment>
<comment type="cofactor">
    <cofactor>
        <name>Fe(3+)</name>
        <dbReference type="ChEBI" id="CHEBI:29034"/>
    </cofactor>
    <text>Binds Fe(3+) ion per subunit.</text>
</comment>
<comment type="pathway">
    <text>Aromatic compound metabolism; beta-ketoadipate pathway; 3-carboxy-cis,cis-muconate from 3,4-dihydroxybenzoate: step 1/1.</text>
</comment>
<comment type="subunit">
    <text>The enzyme is an oligomer of 12 copies of the alpha and beta chains.</text>
</comment>
<comment type="interaction">
    <interactant intactId="EBI-1029428">
        <id>P20371</id>
    </interactant>
    <interactant intactId="EBI-1029420">
        <id>P20372</id>
        <label>pcaH</label>
    </interactant>
    <organismsDiffer>false</organismsDiffer>
    <experiments>5</experiments>
</comment>
<comment type="similarity">
    <text evidence="2">Belongs to the intradiol ring-cleavage dioxygenase family.</text>
</comment>
<keyword id="KW-0002">3D-structure</keyword>
<keyword id="KW-0058">Aromatic hydrocarbons catabolism</keyword>
<keyword id="KW-0223">Dioxygenase</keyword>
<keyword id="KW-0903">Direct protein sequencing</keyword>
<keyword id="KW-0408">Iron</keyword>
<keyword id="KW-0560">Oxidoreductase</keyword>
<reference key="1">
    <citation type="journal article" date="1990" name="J. Bacteriol.">
        <title>DNA sequences of genes encoding Acinetobacter calcoaceticus protocatechuate 3,4-dioxygenase: evidence indicating shuffling of genes and of DNA sequences within genes during their evolutionary divergence.</title>
        <authorList>
            <person name="Hartnett C."/>
            <person name="Neidle E.L."/>
            <person name="Ngai K.-L."/>
            <person name="Ornston L.N."/>
        </authorList>
    </citation>
    <scope>NUCLEOTIDE SEQUENCE [GENOMIC DNA]</scope>
    <scope>PROTEIN SEQUENCE OF 1-10</scope>
</reference>
<reference key="2">
    <citation type="journal article" date="1994" name="Gene">
        <title>Contrasting patterns of evolutionary divergence within the Acinetobacter calcoaceticus pca operon.</title>
        <authorList>
            <person name="Kowalchuk G.A."/>
            <person name="Hartnett G.B."/>
            <person name="Benson A."/>
            <person name="Houghton J.E."/>
            <person name="Ngai K.-L."/>
            <person name="Ornston L.N."/>
        </authorList>
    </citation>
    <scope>SEQUENCE REVISION TO 40</scope>
</reference>
<reference key="3">
    <citation type="journal article" date="2004" name="Nucleic Acids Res.">
        <title>Unique features revealed by the genome sequence of Acinetobacter sp. ADP1, a versatile and naturally transformation competent bacterium.</title>
        <authorList>
            <person name="Barbe V."/>
            <person name="Vallenet D."/>
            <person name="Fonknechten N."/>
            <person name="Kreimeyer A."/>
            <person name="Oztas S."/>
            <person name="Labarre L."/>
            <person name="Cruveiller S."/>
            <person name="Robert C."/>
            <person name="Duprat S."/>
            <person name="Wincker P."/>
            <person name="Ornston L.N."/>
            <person name="Weissenbach J."/>
            <person name="Marliere P."/>
            <person name="Cohen G.N."/>
            <person name="Medigue C."/>
        </authorList>
    </citation>
    <scope>NUCLEOTIDE SEQUENCE [LARGE SCALE GENOMIC DNA]</scope>
    <source>
        <strain>ATCC 33305 / BD413 / ADP1</strain>
    </source>
</reference>
<proteinExistence type="evidence at protein level"/>
<name>PCXA_ACIAD</name>
<evidence type="ECO:0000255" key="1"/>
<evidence type="ECO:0000305" key="2"/>
<evidence type="ECO:0007829" key="3">
    <source>
        <dbReference type="PDB" id="2BUM"/>
    </source>
</evidence>
<evidence type="ECO:0007829" key="4">
    <source>
        <dbReference type="PDB" id="2BUX"/>
    </source>
</evidence>
<feature type="chain" id="PRO_0000085094" description="Protocatechuate 3,4-dioxygenase alpha chain">
    <location>
        <begin position="1"/>
        <end position="209"/>
    </location>
</feature>
<feature type="binding site" evidence="1">
    <location>
        <position position="142"/>
    </location>
    <ligand>
        <name>3,4-dihydroxybenzoate</name>
        <dbReference type="ChEBI" id="CHEBI:36241"/>
    </ligand>
</feature>
<feature type="sequence conflict" description="In Ref. 1; AAC37154." evidence="2" ref="1">
    <original>G</original>
    <variation>S</variation>
    <location>
        <position position="64"/>
    </location>
</feature>
<feature type="helix" evidence="3">
    <location>
        <begin position="21"/>
        <end position="24"/>
    </location>
</feature>
<feature type="helix" evidence="3">
    <location>
        <begin position="27"/>
        <end position="30"/>
    </location>
</feature>
<feature type="strand" evidence="3">
    <location>
        <begin position="52"/>
        <end position="57"/>
    </location>
</feature>
<feature type="strand" evidence="3">
    <location>
        <begin position="71"/>
        <end position="75"/>
    </location>
</feature>
<feature type="strand" evidence="3">
    <location>
        <begin position="101"/>
        <end position="105"/>
    </location>
</feature>
<feature type="turn" evidence="3">
    <location>
        <begin position="108"/>
        <end position="110"/>
    </location>
</feature>
<feature type="strand" evidence="3">
    <location>
        <begin position="113"/>
        <end position="118"/>
    </location>
</feature>
<feature type="helix" evidence="4">
    <location>
        <begin position="126"/>
        <end position="128"/>
    </location>
</feature>
<feature type="strand" evidence="3">
    <location>
        <begin position="135"/>
        <end position="140"/>
    </location>
</feature>
<feature type="strand" evidence="3">
    <location>
        <begin position="148"/>
        <end position="154"/>
    </location>
</feature>
<feature type="helix" evidence="3">
    <location>
        <begin position="155"/>
        <end position="157"/>
    </location>
</feature>
<feature type="helix" evidence="3">
    <location>
        <begin position="158"/>
        <end position="161"/>
    </location>
</feature>
<feature type="helix" evidence="3">
    <location>
        <begin position="165"/>
        <end position="168"/>
    </location>
</feature>
<feature type="helix" evidence="3">
    <location>
        <begin position="173"/>
        <end position="176"/>
    </location>
</feature>
<feature type="helix" evidence="3">
    <location>
        <begin position="177"/>
        <end position="179"/>
    </location>
</feature>
<feature type="strand" evidence="3">
    <location>
        <begin position="180"/>
        <end position="186"/>
    </location>
</feature>
<feature type="strand" evidence="3">
    <location>
        <begin position="189"/>
        <end position="193"/>
    </location>
</feature>
<gene>
    <name type="primary">pcaG</name>
    <name type="ordered locus">ACIAD1712</name>
</gene>
<accession>P20371</accession>
<accession>Q43977</accession>
<accession>Q6FBK8</accession>
<dbReference type="EC" id="1.13.11.3"/>
<dbReference type="EMBL" id="L05770">
    <property type="protein sequence ID" value="AAC37154.1"/>
    <property type="molecule type" value="Genomic_DNA"/>
</dbReference>
<dbReference type="EMBL" id="CR543861">
    <property type="protein sequence ID" value="CAG68554.1"/>
    <property type="molecule type" value="Genomic_DNA"/>
</dbReference>
<dbReference type="RefSeq" id="WP_004926643.1">
    <property type="nucleotide sequence ID" value="NC_005966.1"/>
</dbReference>
<dbReference type="PDB" id="1EO2">
    <property type="method" value="X-ray"/>
    <property type="resolution" value="2.25 A"/>
    <property type="chains" value="A=1-209"/>
</dbReference>
<dbReference type="PDB" id="1EO9">
    <property type="method" value="X-ray"/>
    <property type="resolution" value="2.00 A"/>
    <property type="chains" value="A=1-209"/>
</dbReference>
<dbReference type="PDB" id="1EOA">
    <property type="method" value="X-ray"/>
    <property type="resolution" value="2.15 A"/>
    <property type="chains" value="A=1-209"/>
</dbReference>
<dbReference type="PDB" id="1EOB">
    <property type="method" value="X-ray"/>
    <property type="resolution" value="2.20 A"/>
    <property type="chains" value="A=1-209"/>
</dbReference>
<dbReference type="PDB" id="1EOC">
    <property type="method" value="X-ray"/>
    <property type="resolution" value="2.25 A"/>
    <property type="chains" value="A=1-209"/>
</dbReference>
<dbReference type="PDB" id="2BUM">
    <property type="method" value="X-ray"/>
    <property type="resolution" value="1.80 A"/>
    <property type="chains" value="A=1-209"/>
</dbReference>
<dbReference type="PDB" id="2BUQ">
    <property type="method" value="X-ray"/>
    <property type="resolution" value="1.80 A"/>
    <property type="chains" value="A=1-209"/>
</dbReference>
<dbReference type="PDB" id="2BUR">
    <property type="method" value="X-ray"/>
    <property type="resolution" value="1.80 A"/>
    <property type="chains" value="A=1-209"/>
</dbReference>
<dbReference type="PDB" id="2BUT">
    <property type="method" value="X-ray"/>
    <property type="resolution" value="1.85 A"/>
    <property type="chains" value="A=1-209"/>
</dbReference>
<dbReference type="PDB" id="2BUU">
    <property type="method" value="X-ray"/>
    <property type="resolution" value="1.80 A"/>
    <property type="chains" value="A=1-209"/>
</dbReference>
<dbReference type="PDB" id="2BUV">
    <property type="method" value="X-ray"/>
    <property type="resolution" value="1.80 A"/>
    <property type="chains" value="A=1-209"/>
</dbReference>
<dbReference type="PDB" id="2BUW">
    <property type="method" value="X-ray"/>
    <property type="resolution" value="1.80 A"/>
    <property type="chains" value="A=1-209"/>
</dbReference>
<dbReference type="PDB" id="2BUX">
    <property type="method" value="X-ray"/>
    <property type="resolution" value="1.80 A"/>
    <property type="chains" value="A=1-209"/>
</dbReference>
<dbReference type="PDB" id="2BUY">
    <property type="method" value="X-ray"/>
    <property type="resolution" value="1.80 A"/>
    <property type="chains" value="A=1-209"/>
</dbReference>
<dbReference type="PDB" id="2BUZ">
    <property type="method" value="X-ray"/>
    <property type="resolution" value="1.80 A"/>
    <property type="chains" value="A=1-209"/>
</dbReference>
<dbReference type="PDB" id="2BV0">
    <property type="method" value="X-ray"/>
    <property type="resolution" value="1.80 A"/>
    <property type="chains" value="A=1-209"/>
</dbReference>
<dbReference type="PDBsum" id="1EO2"/>
<dbReference type="PDBsum" id="1EO9"/>
<dbReference type="PDBsum" id="1EOA"/>
<dbReference type="PDBsum" id="1EOB"/>
<dbReference type="PDBsum" id="1EOC"/>
<dbReference type="PDBsum" id="2BUM"/>
<dbReference type="PDBsum" id="2BUQ"/>
<dbReference type="PDBsum" id="2BUR"/>
<dbReference type="PDBsum" id="2BUT"/>
<dbReference type="PDBsum" id="2BUU"/>
<dbReference type="PDBsum" id="2BUV"/>
<dbReference type="PDBsum" id="2BUW"/>
<dbReference type="PDBsum" id="2BUX"/>
<dbReference type="PDBsum" id="2BUY"/>
<dbReference type="PDBsum" id="2BUZ"/>
<dbReference type="PDBsum" id="2BV0"/>
<dbReference type="SMR" id="P20371"/>
<dbReference type="IntAct" id="P20371">
    <property type="interactions" value="1"/>
</dbReference>
<dbReference type="STRING" id="202950.GCA_001485005_03090"/>
<dbReference type="GeneID" id="45234099"/>
<dbReference type="KEGG" id="aci:ACIAD1712"/>
<dbReference type="eggNOG" id="COG3485">
    <property type="taxonomic scope" value="Bacteria"/>
</dbReference>
<dbReference type="HOGENOM" id="CLU_027719_7_1_6"/>
<dbReference type="OrthoDB" id="9805815at2"/>
<dbReference type="BioCyc" id="ASP62977:ACIAD_RS07890-MONOMER"/>
<dbReference type="UniPathway" id="UPA00157">
    <property type="reaction ID" value="UER00264"/>
</dbReference>
<dbReference type="EvolutionaryTrace" id="P20371"/>
<dbReference type="PRO" id="PR:P20371"/>
<dbReference type="Proteomes" id="UP000000430">
    <property type="component" value="Chromosome"/>
</dbReference>
<dbReference type="GO" id="GO:0008199">
    <property type="term" value="F:ferric iron binding"/>
    <property type="evidence" value="ECO:0007669"/>
    <property type="project" value="InterPro"/>
</dbReference>
<dbReference type="GO" id="GO:0018578">
    <property type="term" value="F:protocatechuate 3,4-dioxygenase activity"/>
    <property type="evidence" value="ECO:0007669"/>
    <property type="project" value="UniProtKB-EC"/>
</dbReference>
<dbReference type="GO" id="GO:0042952">
    <property type="term" value="P:beta-ketoadipate pathway"/>
    <property type="evidence" value="ECO:0007669"/>
    <property type="project" value="UniProtKB-UniPathway"/>
</dbReference>
<dbReference type="CDD" id="cd03463">
    <property type="entry name" value="3_4-PCD_alpha"/>
    <property type="match status" value="1"/>
</dbReference>
<dbReference type="Gene3D" id="2.60.130.10">
    <property type="entry name" value="Aromatic compound dioxygenase"/>
    <property type="match status" value="1"/>
</dbReference>
<dbReference type="InterPro" id="IPR000627">
    <property type="entry name" value="Intradiol_dOase_C"/>
</dbReference>
<dbReference type="InterPro" id="IPR015889">
    <property type="entry name" value="Intradiol_dOase_core"/>
</dbReference>
<dbReference type="InterPro" id="IPR050770">
    <property type="entry name" value="Intradiol_RC_Dioxygenase"/>
</dbReference>
<dbReference type="InterPro" id="IPR012786">
    <property type="entry name" value="Protocat_dOase_a"/>
</dbReference>
<dbReference type="NCBIfam" id="TIGR02423">
    <property type="entry name" value="protocat_alph"/>
    <property type="match status" value="1"/>
</dbReference>
<dbReference type="PANTHER" id="PTHR33711">
    <property type="entry name" value="DIOXYGENASE, PUTATIVE (AFU_ORTHOLOGUE AFUA_2G02910)-RELATED"/>
    <property type="match status" value="1"/>
</dbReference>
<dbReference type="PANTHER" id="PTHR33711:SF9">
    <property type="entry name" value="PROTOCATECHUATE 3,4-DIOXYGENASE ALPHA CHAIN"/>
    <property type="match status" value="1"/>
</dbReference>
<dbReference type="Pfam" id="PF00775">
    <property type="entry name" value="Dioxygenase_C"/>
    <property type="match status" value="1"/>
</dbReference>
<dbReference type="SUPFAM" id="SSF49482">
    <property type="entry name" value="Aromatic compound dioxygenase"/>
    <property type="match status" value="1"/>
</dbReference>
<dbReference type="PROSITE" id="PS00083">
    <property type="entry name" value="INTRADIOL_DIOXYGENAS"/>
    <property type="match status" value="1"/>
</dbReference>
<organism>
    <name type="scientific">Acinetobacter baylyi (strain ATCC 33305 / BD413 / ADP1)</name>
    <dbReference type="NCBI Taxonomy" id="62977"/>
    <lineage>
        <taxon>Bacteria</taxon>
        <taxon>Pseudomonadati</taxon>
        <taxon>Pseudomonadota</taxon>
        <taxon>Gammaproteobacteria</taxon>
        <taxon>Moraxellales</taxon>
        <taxon>Moraxellaceae</taxon>
        <taxon>Acinetobacter</taxon>
    </lineage>
</organism>
<protein>
    <recommendedName>
        <fullName>Protocatechuate 3,4-dioxygenase alpha chain</fullName>
        <ecNumber>1.13.11.3</ecNumber>
    </recommendedName>
    <alternativeName>
        <fullName>3,4-PCD</fullName>
    </alternativeName>
</protein>
<sequence length="209" mass="23484">MNGWNFQELKETPSQTGGPYVHIGLLPKQANIEVFEHNLDNNLVQDNTQGQRIRLEGQVFDGLGLPLRDVLIEIWQADTNGVYPSQADTQGKQVDPNFLGWGRTGADFGTGFWSFNTIKPGAVPGRKGSTQAPHISLIIFARGINIGLHTRVYFDDEAEANAKDPVLNSIEWATRRQTLVAKREERDGEVVYRFDIRIQGENETVFFDI</sequence>